<protein>
    <recommendedName>
        <fullName>Conotoxin TsMMSK-011</fullName>
    </recommendedName>
    <alternativeName>
        <fullName>Conotoxin TsMMSK-B012</fullName>
    </alternativeName>
</protein>
<feature type="signal peptide" evidence="3">
    <location>
        <begin position="1"/>
        <end position="20"/>
    </location>
</feature>
<feature type="propeptide" id="PRO_0000404898" evidence="1">
    <location>
        <begin position="21"/>
        <end position="50"/>
    </location>
</feature>
<feature type="peptide" id="PRO_0000404899" description="Conotoxin TsMMSK-011">
    <location>
        <begin position="53"/>
        <end position="67"/>
    </location>
</feature>
<feature type="modified residue" description="4-hydroxyproline" evidence="1">
    <location>
        <position position="63"/>
    </location>
</feature>
<feature type="disulfide bond" evidence="2">
    <location>
        <begin position="53"/>
        <end position="65"/>
    </location>
</feature>
<feature type="disulfide bond" evidence="2">
    <location>
        <begin position="54"/>
        <end position="61"/>
    </location>
</feature>
<feature type="disulfide bond" evidence="2">
    <location>
        <begin position="58"/>
        <end position="64"/>
    </location>
</feature>
<proteinExistence type="evidence at transcript level"/>
<dbReference type="EMBL" id="AF214938">
    <property type="protein sequence ID" value="AAG60366.1"/>
    <property type="molecule type" value="mRNA"/>
</dbReference>
<dbReference type="ConoServer" id="625">
    <property type="toxin name" value="Ts3.3 precursor"/>
</dbReference>
<dbReference type="GO" id="GO:0005576">
    <property type="term" value="C:extracellular region"/>
    <property type="evidence" value="ECO:0007669"/>
    <property type="project" value="UniProtKB-SubCell"/>
</dbReference>
<dbReference type="GO" id="GO:0008200">
    <property type="term" value="F:ion channel inhibitor activity"/>
    <property type="evidence" value="ECO:0007669"/>
    <property type="project" value="InterPro"/>
</dbReference>
<dbReference type="GO" id="GO:0090729">
    <property type="term" value="F:toxin activity"/>
    <property type="evidence" value="ECO:0007669"/>
    <property type="project" value="UniProtKB-KW"/>
</dbReference>
<dbReference type="InterPro" id="IPR017896">
    <property type="entry name" value="4Fe4S_Fe-S-bd"/>
</dbReference>
<dbReference type="InterPro" id="IPR004214">
    <property type="entry name" value="Conotoxin"/>
</dbReference>
<dbReference type="Pfam" id="PF02950">
    <property type="entry name" value="Conotoxin"/>
    <property type="match status" value="1"/>
</dbReference>
<accession>Q9BPI6</accession>
<comment type="subcellular location">
    <subcellularLocation>
        <location evidence="1">Secreted</location>
    </subcellularLocation>
</comment>
<comment type="tissue specificity">
    <text>Expressed by the venom duct.</text>
</comment>
<comment type="domain">
    <text>The cysteine framework is III (CC-C-C-CC). Classified in the M-2 branch, since 2 residues stand between the fourth and the fifth cysteine residues.</text>
</comment>
<comment type="similarity">
    <text evidence="4">Belongs to the conotoxin M superfamily.</text>
</comment>
<sequence>MMSKLGVLLTICLLLFPLTAVQLDGDQPADLPALRTQDISTDHSPWFDPVKRCCSRYCYICIPCCPN</sequence>
<name>M233_CONTS</name>
<reference key="1">
    <citation type="journal article" date="2001" name="Mol. Biol. Evol.">
        <title>Mechanisms for evolving hypervariability: the case of conopeptides.</title>
        <authorList>
            <person name="Conticello S.G."/>
            <person name="Gilad Y."/>
            <person name="Avidan N."/>
            <person name="Ben-Asher E."/>
            <person name="Levy Z."/>
            <person name="Fainzilber M."/>
        </authorList>
    </citation>
    <scope>NUCLEOTIDE SEQUENCE [MRNA]</scope>
    <source>
        <tissue>Venom duct</tissue>
    </source>
</reference>
<organism>
    <name type="scientific">Conus tessulatus</name>
    <name type="common">Tessellate cone</name>
    <dbReference type="NCBI Taxonomy" id="101317"/>
    <lineage>
        <taxon>Eukaryota</taxon>
        <taxon>Metazoa</taxon>
        <taxon>Spiralia</taxon>
        <taxon>Lophotrochozoa</taxon>
        <taxon>Mollusca</taxon>
        <taxon>Gastropoda</taxon>
        <taxon>Caenogastropoda</taxon>
        <taxon>Neogastropoda</taxon>
        <taxon>Conoidea</taxon>
        <taxon>Conidae</taxon>
        <taxon>Conus</taxon>
        <taxon>Tesselliconus</taxon>
    </lineage>
</organism>
<evidence type="ECO:0000250" key="1"/>
<evidence type="ECO:0000250" key="2">
    <source>
        <dbReference type="UniProtKB" id="P0CI24"/>
    </source>
</evidence>
<evidence type="ECO:0000255" key="3"/>
<evidence type="ECO:0000305" key="4"/>
<keyword id="KW-0165">Cleavage on pair of basic residues</keyword>
<keyword id="KW-1015">Disulfide bond</keyword>
<keyword id="KW-0379">Hydroxylation</keyword>
<keyword id="KW-0528">Neurotoxin</keyword>
<keyword id="KW-0964">Secreted</keyword>
<keyword id="KW-0732">Signal</keyword>
<keyword id="KW-0800">Toxin</keyword>